<reference key="1">
    <citation type="journal article" date="1997" name="Nature">
        <title>The complete genome sequence of the gastric pathogen Helicobacter pylori.</title>
        <authorList>
            <person name="Tomb J.-F."/>
            <person name="White O."/>
            <person name="Kerlavage A.R."/>
            <person name="Clayton R.A."/>
            <person name="Sutton G.G."/>
            <person name="Fleischmann R.D."/>
            <person name="Ketchum K.A."/>
            <person name="Klenk H.-P."/>
            <person name="Gill S.R."/>
            <person name="Dougherty B.A."/>
            <person name="Nelson K.E."/>
            <person name="Quackenbush J."/>
            <person name="Zhou L."/>
            <person name="Kirkness E.F."/>
            <person name="Peterson S.N."/>
            <person name="Loftus B.J."/>
            <person name="Richardson D.L."/>
            <person name="Dodson R.J."/>
            <person name="Khalak H.G."/>
            <person name="Glodek A."/>
            <person name="McKenney K."/>
            <person name="FitzGerald L.M."/>
            <person name="Lee N."/>
            <person name="Adams M.D."/>
            <person name="Hickey E.K."/>
            <person name="Berg D.E."/>
            <person name="Gocayne J.D."/>
            <person name="Utterback T.R."/>
            <person name="Peterson J.D."/>
            <person name="Kelley J.M."/>
            <person name="Cotton M.D."/>
            <person name="Weidman J.F."/>
            <person name="Fujii C."/>
            <person name="Bowman C."/>
            <person name="Watthey L."/>
            <person name="Wallin E."/>
            <person name="Hayes W.S."/>
            <person name="Borodovsky M."/>
            <person name="Karp P.D."/>
            <person name="Smith H.O."/>
            <person name="Fraser C.M."/>
            <person name="Venter J.C."/>
        </authorList>
    </citation>
    <scope>NUCLEOTIDE SEQUENCE [LARGE SCALE GENOMIC DNA]</scope>
    <source>
        <strain>ATCC 700392 / 26695</strain>
    </source>
</reference>
<reference evidence="5" key="2">
    <citation type="journal article" date="2008" name="Biochem. Biophys. Res. Commun.">
        <title>Structure-based inhibitor discovery of Helicobacter pylori dehydroquinate synthase.</title>
        <authorList>
            <person name="Liu J.S."/>
            <person name="Cheng W.C."/>
            <person name="Wang H.J."/>
            <person name="Chen Y.C."/>
            <person name="Wang W.C."/>
        </authorList>
    </citation>
    <scope>X-RAY CRYSTALLOGRAPHY (2.40 ANGSTROMS) IN COMPLEX WITH NAD</scope>
    <scope>FUNCTION</scope>
    <scope>CATALYTIC ACTIVITY</scope>
    <scope>COFACTOR</scope>
    <scope>SUBUNIT</scope>
    <source>
        <strain>ATCC 700392 / 26695</strain>
    </source>
</reference>
<proteinExistence type="evidence at protein level"/>
<sequence length="343" mass="39120">MQEILIPLKEKNYKVFLGELPEIKLKQKALIISDSIVAGLHLPYLLERLKALEVRVCVIESGEKYKNFHSLERILNNAFEMQLNRHSLMIALGGGVISDMVGFASSIYFRGIDFINIPTTLLAQVDASVGGKTGINTPYGKNLIGSFHQPKAVYMDLAFLKTLEKREFQAGVAEIIKMAVCFDKNLVERLETKDLKDCLEEVIFQSVNIKAQVVVQDEKEQNIRAGLNYGHTFGHAIEKETDYERFLHGEAIAIGMRMANDLALSLGMLTLKEYERIENLLKKFDLIFHYKILDLQKFYERLFLDKKSENKTIKFILPKGVGAFEVASHIPKETIIKVLEKWH</sequence>
<keyword id="KW-0002">3D-structure</keyword>
<keyword id="KW-0028">Amino-acid biosynthesis</keyword>
<keyword id="KW-0057">Aromatic amino acid biosynthesis</keyword>
<keyword id="KW-0170">Cobalt</keyword>
<keyword id="KW-0963">Cytoplasm</keyword>
<keyword id="KW-0456">Lyase</keyword>
<keyword id="KW-0479">Metal-binding</keyword>
<keyword id="KW-0520">NAD</keyword>
<keyword id="KW-0547">Nucleotide-binding</keyword>
<keyword id="KW-1185">Reference proteome</keyword>
<keyword id="KW-0862">Zinc</keyword>
<evidence type="ECO:0000255" key="1">
    <source>
        <dbReference type="HAMAP-Rule" id="MF_00110"/>
    </source>
</evidence>
<evidence type="ECO:0000269" key="2">
    <source>
    </source>
</evidence>
<evidence type="ECO:0000303" key="3">
    <source>
    </source>
</evidence>
<evidence type="ECO:0000305" key="4"/>
<evidence type="ECO:0007744" key="5">
    <source>
        <dbReference type="PDB" id="3CLH"/>
    </source>
</evidence>
<evidence type="ECO:0007829" key="6">
    <source>
        <dbReference type="PDB" id="3CLH"/>
    </source>
</evidence>
<protein>
    <recommendedName>
        <fullName evidence="1">3-dehydroquinate synthase</fullName>
        <shortName evidence="1 3">DHQS</shortName>
        <ecNumber evidence="1 2">4.2.3.4</ecNumber>
    </recommendedName>
</protein>
<accession>P56081</accession>
<gene>
    <name evidence="1 3" type="primary">aroB</name>
    <name type="ordered locus">HP_0283</name>
</gene>
<dbReference type="EC" id="4.2.3.4" evidence="1 2"/>
<dbReference type="EMBL" id="AE000511">
    <property type="protein sequence ID" value="AAD07351.1"/>
    <property type="molecule type" value="Genomic_DNA"/>
</dbReference>
<dbReference type="PIR" id="C64555">
    <property type="entry name" value="C64555"/>
</dbReference>
<dbReference type="RefSeq" id="NP_207081.1">
    <property type="nucleotide sequence ID" value="NC_000915.1"/>
</dbReference>
<dbReference type="RefSeq" id="WP_001156090.1">
    <property type="nucleotide sequence ID" value="NC_018939.1"/>
</dbReference>
<dbReference type="PDB" id="3CLH">
    <property type="method" value="X-ray"/>
    <property type="resolution" value="2.40 A"/>
    <property type="chains" value="A/B=1-343"/>
</dbReference>
<dbReference type="PDBsum" id="3CLH"/>
<dbReference type="SMR" id="P56081"/>
<dbReference type="FunCoup" id="P56081">
    <property type="interactions" value="362"/>
</dbReference>
<dbReference type="IntAct" id="P56081">
    <property type="interactions" value="1"/>
</dbReference>
<dbReference type="STRING" id="85962.HP_0283"/>
<dbReference type="PaxDb" id="85962-C694_01430"/>
<dbReference type="EnsemblBacteria" id="AAD07351">
    <property type="protein sequence ID" value="AAD07351"/>
    <property type="gene ID" value="HP_0283"/>
</dbReference>
<dbReference type="KEGG" id="heo:C694_01430"/>
<dbReference type="KEGG" id="hpy:HP_0283"/>
<dbReference type="PATRIC" id="fig|85962.47.peg.303"/>
<dbReference type="eggNOG" id="COG0337">
    <property type="taxonomic scope" value="Bacteria"/>
</dbReference>
<dbReference type="InParanoid" id="P56081"/>
<dbReference type="OrthoDB" id="9806583at2"/>
<dbReference type="PhylomeDB" id="P56081"/>
<dbReference type="BRENDA" id="4.2.3.4">
    <property type="organism ID" value="2604"/>
</dbReference>
<dbReference type="UniPathway" id="UPA00053">
    <property type="reaction ID" value="UER00085"/>
</dbReference>
<dbReference type="EvolutionaryTrace" id="P56081"/>
<dbReference type="Proteomes" id="UP000000429">
    <property type="component" value="Chromosome"/>
</dbReference>
<dbReference type="GO" id="GO:0005737">
    <property type="term" value="C:cytoplasm"/>
    <property type="evidence" value="ECO:0007669"/>
    <property type="project" value="UniProtKB-SubCell"/>
</dbReference>
<dbReference type="GO" id="GO:0003856">
    <property type="term" value="F:3-dehydroquinate synthase activity"/>
    <property type="evidence" value="ECO:0000318"/>
    <property type="project" value="GO_Central"/>
</dbReference>
<dbReference type="GO" id="GO:0046872">
    <property type="term" value="F:metal ion binding"/>
    <property type="evidence" value="ECO:0007669"/>
    <property type="project" value="UniProtKB-KW"/>
</dbReference>
<dbReference type="GO" id="GO:0000166">
    <property type="term" value="F:nucleotide binding"/>
    <property type="evidence" value="ECO:0007669"/>
    <property type="project" value="UniProtKB-KW"/>
</dbReference>
<dbReference type="GO" id="GO:0008652">
    <property type="term" value="P:amino acid biosynthetic process"/>
    <property type="evidence" value="ECO:0007669"/>
    <property type="project" value="UniProtKB-KW"/>
</dbReference>
<dbReference type="GO" id="GO:0009073">
    <property type="term" value="P:aromatic amino acid family biosynthetic process"/>
    <property type="evidence" value="ECO:0000318"/>
    <property type="project" value="GO_Central"/>
</dbReference>
<dbReference type="GO" id="GO:0009423">
    <property type="term" value="P:chorismate biosynthetic process"/>
    <property type="evidence" value="ECO:0007669"/>
    <property type="project" value="UniProtKB-UniRule"/>
</dbReference>
<dbReference type="CDD" id="cd08195">
    <property type="entry name" value="DHQS"/>
    <property type="match status" value="1"/>
</dbReference>
<dbReference type="FunFam" id="1.20.1090.10:FF:000025">
    <property type="entry name" value="3-dehydroquinate synthase"/>
    <property type="match status" value="1"/>
</dbReference>
<dbReference type="FunFam" id="3.40.50.1970:FF:000030">
    <property type="entry name" value="3-dehydroquinate synthase"/>
    <property type="match status" value="1"/>
</dbReference>
<dbReference type="Gene3D" id="3.40.50.1970">
    <property type="match status" value="1"/>
</dbReference>
<dbReference type="Gene3D" id="1.20.1090.10">
    <property type="entry name" value="Dehydroquinate synthase-like - alpha domain"/>
    <property type="match status" value="1"/>
</dbReference>
<dbReference type="HAMAP" id="MF_00110">
    <property type="entry name" value="DHQ_synthase"/>
    <property type="match status" value="1"/>
</dbReference>
<dbReference type="InterPro" id="IPR050071">
    <property type="entry name" value="Dehydroquinate_synthase"/>
</dbReference>
<dbReference type="InterPro" id="IPR016037">
    <property type="entry name" value="DHQ_synth_AroB"/>
</dbReference>
<dbReference type="InterPro" id="IPR030963">
    <property type="entry name" value="DHQ_synth_fam"/>
</dbReference>
<dbReference type="InterPro" id="IPR030960">
    <property type="entry name" value="DHQS/DOIS_N"/>
</dbReference>
<dbReference type="InterPro" id="IPR056179">
    <property type="entry name" value="DHQS_C"/>
</dbReference>
<dbReference type="NCBIfam" id="TIGR01357">
    <property type="entry name" value="aroB"/>
    <property type="match status" value="1"/>
</dbReference>
<dbReference type="PANTHER" id="PTHR43622">
    <property type="entry name" value="3-DEHYDROQUINATE SYNTHASE"/>
    <property type="match status" value="1"/>
</dbReference>
<dbReference type="PANTHER" id="PTHR43622:SF7">
    <property type="entry name" value="3-DEHYDROQUINATE SYNTHASE, CHLOROPLASTIC"/>
    <property type="match status" value="1"/>
</dbReference>
<dbReference type="Pfam" id="PF01761">
    <property type="entry name" value="DHQ_synthase"/>
    <property type="match status" value="1"/>
</dbReference>
<dbReference type="Pfam" id="PF24621">
    <property type="entry name" value="DHQS_C"/>
    <property type="match status" value="1"/>
</dbReference>
<dbReference type="PIRSF" id="PIRSF001455">
    <property type="entry name" value="DHQ_synth"/>
    <property type="match status" value="1"/>
</dbReference>
<dbReference type="SUPFAM" id="SSF56796">
    <property type="entry name" value="Dehydroquinate synthase-like"/>
    <property type="match status" value="1"/>
</dbReference>
<organism>
    <name type="scientific">Helicobacter pylori (strain ATCC 700392 / 26695)</name>
    <name type="common">Campylobacter pylori</name>
    <dbReference type="NCBI Taxonomy" id="85962"/>
    <lineage>
        <taxon>Bacteria</taxon>
        <taxon>Pseudomonadati</taxon>
        <taxon>Campylobacterota</taxon>
        <taxon>Epsilonproteobacteria</taxon>
        <taxon>Campylobacterales</taxon>
        <taxon>Helicobacteraceae</taxon>
        <taxon>Helicobacter</taxon>
    </lineage>
</organism>
<name>AROB_HELPY</name>
<comment type="function">
    <text evidence="1 2">Catalyzes the conversion of 3-deoxy-D-arabino-heptulosonate 7-phosphate (DAHP) to dehydroquinate (DHQ).</text>
</comment>
<comment type="catalytic activity">
    <reaction evidence="1 2">
        <text>7-phospho-2-dehydro-3-deoxy-D-arabino-heptonate = 3-dehydroquinate + phosphate</text>
        <dbReference type="Rhea" id="RHEA:21968"/>
        <dbReference type="ChEBI" id="CHEBI:32364"/>
        <dbReference type="ChEBI" id="CHEBI:43474"/>
        <dbReference type="ChEBI" id="CHEBI:58394"/>
        <dbReference type="EC" id="4.2.3.4"/>
    </reaction>
</comment>
<comment type="cofactor">
    <cofactor evidence="1 2">
        <name>NAD(+)</name>
        <dbReference type="ChEBI" id="CHEBI:57540"/>
    </cofactor>
</comment>
<comment type="cofactor">
    <cofactor evidence="1 2">
        <name>Co(2+)</name>
        <dbReference type="ChEBI" id="CHEBI:48828"/>
    </cofactor>
    <cofactor evidence="1">
        <name>Zn(2+)</name>
        <dbReference type="ChEBI" id="CHEBI:29105"/>
    </cofactor>
    <text evidence="1">Binds 1 divalent metal cation per subunit. Can use either Co(2+) or Zn(2+).</text>
</comment>
<comment type="pathway">
    <text evidence="1">Metabolic intermediate biosynthesis; chorismate biosynthesis; chorismate from D-erythrose 4-phosphate and phosphoenolpyruvate: step 2/7.</text>
</comment>
<comment type="subunit">
    <text evidence="2">Homodimer.</text>
</comment>
<comment type="subcellular location">
    <subcellularLocation>
        <location evidence="1">Cytoplasm</location>
    </subcellularLocation>
</comment>
<comment type="similarity">
    <text evidence="1 4">Belongs to the sugar phosphate cyclases superfamily. Dehydroquinate synthase family.</text>
</comment>
<feature type="chain" id="PRO_0000140745" description="3-dehydroquinate synthase">
    <location>
        <begin position="1"/>
        <end position="343"/>
    </location>
</feature>
<feature type="binding site" evidence="1 2">
    <location>
        <begin position="61"/>
        <end position="66"/>
    </location>
    <ligand>
        <name>NAD(+)</name>
        <dbReference type="ChEBI" id="CHEBI:57540"/>
    </ligand>
</feature>
<feature type="binding site" evidence="2">
    <location>
        <begin position="95"/>
        <end position="96"/>
    </location>
    <ligand>
        <name>NAD(+)</name>
        <dbReference type="ChEBI" id="CHEBI:57540"/>
    </ligand>
</feature>
<feature type="binding site" evidence="1 2">
    <location>
        <begin position="119"/>
        <end position="120"/>
    </location>
    <ligand>
        <name>NAD(+)</name>
        <dbReference type="ChEBI" id="CHEBI:57540"/>
    </ligand>
</feature>
<feature type="binding site" evidence="1">
    <location>
        <position position="132"/>
    </location>
    <ligand>
        <name>NAD(+)</name>
        <dbReference type="ChEBI" id="CHEBI:57540"/>
    </ligand>
</feature>
<feature type="binding site" evidence="1">
    <location>
        <position position="141"/>
    </location>
    <ligand>
        <name>NAD(+)</name>
        <dbReference type="ChEBI" id="CHEBI:57540"/>
    </ligand>
</feature>
<feature type="binding site" evidence="2">
    <location>
        <position position="142"/>
    </location>
    <ligand>
        <name>NAD(+)</name>
        <dbReference type="ChEBI" id="CHEBI:57540"/>
    </ligand>
</feature>
<feature type="binding site" evidence="1 2">
    <location>
        <begin position="159"/>
        <end position="162"/>
    </location>
    <ligand>
        <name>NAD(+)</name>
        <dbReference type="ChEBI" id="CHEBI:57540"/>
    </ligand>
</feature>
<feature type="binding site" evidence="1">
    <location>
        <position position="174"/>
    </location>
    <ligand>
        <name>Zn(2+)</name>
        <dbReference type="ChEBI" id="CHEBI:29105"/>
    </ligand>
</feature>
<feature type="binding site" evidence="1">
    <location>
        <position position="231"/>
    </location>
    <ligand>
        <name>Zn(2+)</name>
        <dbReference type="ChEBI" id="CHEBI:29105"/>
    </ligand>
</feature>
<feature type="binding site" evidence="1">
    <location>
        <position position="248"/>
    </location>
    <ligand>
        <name>Zn(2+)</name>
        <dbReference type="ChEBI" id="CHEBI:29105"/>
    </ligand>
</feature>
<feature type="strand" evidence="6">
    <location>
        <begin position="10"/>
        <end position="12"/>
    </location>
</feature>
<feature type="strand" evidence="6">
    <location>
        <begin position="14"/>
        <end position="19"/>
    </location>
</feature>
<feature type="strand" evidence="6">
    <location>
        <begin position="29"/>
        <end position="34"/>
    </location>
</feature>
<feature type="helix" evidence="6">
    <location>
        <begin position="35"/>
        <end position="38"/>
    </location>
</feature>
<feature type="helix" evidence="6">
    <location>
        <begin position="42"/>
        <end position="46"/>
    </location>
</feature>
<feature type="strand" evidence="6">
    <location>
        <begin position="54"/>
        <end position="59"/>
    </location>
</feature>
<feature type="helix" evidence="6">
    <location>
        <begin position="63"/>
        <end position="65"/>
    </location>
</feature>
<feature type="helix" evidence="6">
    <location>
        <begin position="68"/>
        <end position="80"/>
    </location>
</feature>
<feature type="strand" evidence="6">
    <location>
        <begin position="88"/>
        <end position="94"/>
    </location>
</feature>
<feature type="helix" evidence="6">
    <location>
        <begin position="95"/>
        <end position="107"/>
    </location>
</feature>
<feature type="strand" evidence="6">
    <location>
        <begin position="113"/>
        <end position="118"/>
    </location>
</feature>
<feature type="helix" evidence="6">
    <location>
        <begin position="121"/>
        <end position="125"/>
    </location>
</feature>
<feature type="strand" evidence="6">
    <location>
        <begin position="128"/>
        <end position="130"/>
    </location>
</feature>
<feature type="strand" evidence="6">
    <location>
        <begin position="132"/>
        <end position="137"/>
    </location>
</feature>
<feature type="strand" evidence="6">
    <location>
        <begin position="140"/>
        <end position="147"/>
    </location>
</feature>
<feature type="strand" evidence="6">
    <location>
        <begin position="151"/>
        <end position="155"/>
    </location>
</feature>
<feature type="helix" evidence="6">
    <location>
        <begin position="160"/>
        <end position="162"/>
    </location>
</feature>
<feature type="helix" evidence="6">
    <location>
        <begin position="165"/>
        <end position="182"/>
    </location>
</feature>
<feature type="helix" evidence="6">
    <location>
        <begin position="184"/>
        <end position="192"/>
    </location>
</feature>
<feature type="turn" evidence="6">
    <location>
        <begin position="195"/>
        <end position="197"/>
    </location>
</feature>
<feature type="helix" evidence="6">
    <location>
        <begin position="199"/>
        <end position="213"/>
    </location>
</feature>
<feature type="turn" evidence="6">
    <location>
        <begin position="225"/>
        <end position="230"/>
    </location>
</feature>
<feature type="helix" evidence="6">
    <location>
        <begin position="231"/>
        <end position="240"/>
    </location>
</feature>
<feature type="turn" evidence="6">
    <location>
        <begin position="241"/>
        <end position="243"/>
    </location>
</feature>
<feature type="helix" evidence="6">
    <location>
        <begin position="248"/>
        <end position="265"/>
    </location>
</feature>
<feature type="helix" evidence="6">
    <location>
        <begin position="271"/>
        <end position="283"/>
    </location>
</feature>
<feature type="strand" evidence="6">
    <location>
        <begin position="320"/>
        <end position="322"/>
    </location>
</feature>
<feature type="helix" evidence="6">
    <location>
        <begin position="332"/>
        <end position="338"/>
    </location>
</feature>